<name>1B01_SAGOE</name>
<keyword id="KW-1015">Disulfide bond</keyword>
<keyword id="KW-0325">Glycoprotein</keyword>
<keyword id="KW-0391">Immunity</keyword>
<keyword id="KW-0472">Membrane</keyword>
<keyword id="KW-0490">MHC I</keyword>
<keyword id="KW-0597">Phosphoprotein</keyword>
<keyword id="KW-0732">Signal</keyword>
<keyword id="KW-0812">Transmembrane</keyword>
<keyword id="KW-1133">Transmembrane helix</keyword>
<sequence>MTVMAPRTLLLLLSGALVLTETWAGSHSMRYFSTAVSRPGREEPRYIEVGYVDDTQFVRFDSDAASPRMEPRAQWVEKEGREYWEEETQRAKAFAQTFRVNLQTALGYYNQSEAGSHTIQMMSGCDLGPDGRLLRGYDQHAYDGKDYISLNEDLRSWTAADVAAQITQRKWEAANEAERTRAYLEGTCVEWLHRYLENGKETLQRAEPPKTHVTHHPVSDHEATLRCWALGFYPAEITLTWQRDGEDQTQDMELVETRPTGNGTFQKWAAVVVLSGEEHRYTCHVQHEGLPEPLTLRWEPPSQPTIPIMGIVAILAILGAVVTGAVVTAVMWRKKSSDKKGGSYSQAARSDSAQGSDVSLTACKV</sequence>
<dbReference type="EMBL" id="M33476">
    <property type="protein sequence ID" value="AAA36952.1"/>
    <property type="status" value="ALT_INIT"/>
    <property type="molecule type" value="mRNA"/>
</dbReference>
<dbReference type="PIR" id="I72217">
    <property type="entry name" value="I72217"/>
</dbReference>
<dbReference type="PIR" id="S11141">
    <property type="entry name" value="S11141"/>
</dbReference>
<dbReference type="SMR" id="P30516"/>
<dbReference type="GO" id="GO:0031901">
    <property type="term" value="C:early endosome membrane"/>
    <property type="evidence" value="ECO:0007669"/>
    <property type="project" value="UniProtKB-ARBA"/>
</dbReference>
<dbReference type="GO" id="GO:0012507">
    <property type="term" value="C:ER to Golgi transport vesicle membrane"/>
    <property type="evidence" value="ECO:0007669"/>
    <property type="project" value="UniProtKB-ARBA"/>
</dbReference>
<dbReference type="GO" id="GO:0009897">
    <property type="term" value="C:external side of plasma membrane"/>
    <property type="evidence" value="ECO:0007669"/>
    <property type="project" value="TreeGrafter"/>
</dbReference>
<dbReference type="GO" id="GO:0005615">
    <property type="term" value="C:extracellular space"/>
    <property type="evidence" value="ECO:0007669"/>
    <property type="project" value="TreeGrafter"/>
</dbReference>
<dbReference type="GO" id="GO:0098553">
    <property type="term" value="C:lumenal side of endoplasmic reticulum membrane"/>
    <property type="evidence" value="ECO:0007669"/>
    <property type="project" value="UniProtKB-ARBA"/>
</dbReference>
<dbReference type="GO" id="GO:0042612">
    <property type="term" value="C:MHC class I protein complex"/>
    <property type="evidence" value="ECO:0007669"/>
    <property type="project" value="UniProtKB-KW"/>
</dbReference>
<dbReference type="GO" id="GO:0030670">
    <property type="term" value="C:phagocytic vesicle membrane"/>
    <property type="evidence" value="ECO:0007669"/>
    <property type="project" value="UniProtKB-ARBA"/>
</dbReference>
<dbReference type="GO" id="GO:0055038">
    <property type="term" value="C:recycling endosome membrane"/>
    <property type="evidence" value="ECO:0007669"/>
    <property type="project" value="UniProtKB-ARBA"/>
</dbReference>
<dbReference type="GO" id="GO:0042605">
    <property type="term" value="F:peptide antigen binding"/>
    <property type="evidence" value="ECO:0007669"/>
    <property type="project" value="TreeGrafter"/>
</dbReference>
<dbReference type="GO" id="GO:0005102">
    <property type="term" value="F:signaling receptor binding"/>
    <property type="evidence" value="ECO:0007669"/>
    <property type="project" value="TreeGrafter"/>
</dbReference>
<dbReference type="GO" id="GO:0002486">
    <property type="term" value="P:antigen processing and presentation of endogenous peptide antigen via MHC class I via ER pathway, TAP-independent"/>
    <property type="evidence" value="ECO:0007669"/>
    <property type="project" value="TreeGrafter"/>
</dbReference>
<dbReference type="GO" id="GO:0002476">
    <property type="term" value="P:antigen processing and presentation of endogenous peptide antigen via MHC class Ib"/>
    <property type="evidence" value="ECO:0007669"/>
    <property type="project" value="TreeGrafter"/>
</dbReference>
<dbReference type="GO" id="GO:0006955">
    <property type="term" value="P:immune response"/>
    <property type="evidence" value="ECO:0007669"/>
    <property type="project" value="InterPro"/>
</dbReference>
<dbReference type="GO" id="GO:0001916">
    <property type="term" value="P:positive regulation of T cell mediated cytotoxicity"/>
    <property type="evidence" value="ECO:0007669"/>
    <property type="project" value="TreeGrafter"/>
</dbReference>
<dbReference type="CDD" id="cd07698">
    <property type="entry name" value="IgC1_MHC_I_alpha3"/>
    <property type="match status" value="1"/>
</dbReference>
<dbReference type="FunFam" id="2.60.40.10:FF:000014">
    <property type="entry name" value="H-2 class I histocompatibility antigen, alpha chain"/>
    <property type="match status" value="1"/>
</dbReference>
<dbReference type="FunFam" id="3.30.500.10:FF:000001">
    <property type="entry name" value="H-2 class I histocompatibility antigen, alpha chain"/>
    <property type="match status" value="1"/>
</dbReference>
<dbReference type="Gene3D" id="2.60.40.10">
    <property type="entry name" value="Immunoglobulins"/>
    <property type="match status" value="1"/>
</dbReference>
<dbReference type="Gene3D" id="3.30.500.10">
    <property type="entry name" value="MHC class I-like antigen recognition-like"/>
    <property type="match status" value="1"/>
</dbReference>
<dbReference type="InterPro" id="IPR007110">
    <property type="entry name" value="Ig-like_dom"/>
</dbReference>
<dbReference type="InterPro" id="IPR036179">
    <property type="entry name" value="Ig-like_dom_sf"/>
</dbReference>
<dbReference type="InterPro" id="IPR013783">
    <property type="entry name" value="Ig-like_fold"/>
</dbReference>
<dbReference type="InterPro" id="IPR003006">
    <property type="entry name" value="Ig/MHC_CS"/>
</dbReference>
<dbReference type="InterPro" id="IPR003597">
    <property type="entry name" value="Ig_C1-set"/>
</dbReference>
<dbReference type="InterPro" id="IPR050208">
    <property type="entry name" value="MHC_class-I_related"/>
</dbReference>
<dbReference type="InterPro" id="IPR011161">
    <property type="entry name" value="MHC_I-like_Ag-recog"/>
</dbReference>
<dbReference type="InterPro" id="IPR037055">
    <property type="entry name" value="MHC_I-like_Ag-recog_sf"/>
</dbReference>
<dbReference type="InterPro" id="IPR011162">
    <property type="entry name" value="MHC_I/II-like_Ag-recog"/>
</dbReference>
<dbReference type="InterPro" id="IPR001039">
    <property type="entry name" value="MHC_I_a_a1/a2"/>
</dbReference>
<dbReference type="InterPro" id="IPR010579">
    <property type="entry name" value="MHC_I_a_C"/>
</dbReference>
<dbReference type="PANTHER" id="PTHR16675:SF169">
    <property type="entry name" value="HLA CLASS I HISTOCOMPATIBILITY ANTIGEN, ALPHA CHAIN G"/>
    <property type="match status" value="1"/>
</dbReference>
<dbReference type="PANTHER" id="PTHR16675">
    <property type="entry name" value="MHC CLASS I-RELATED"/>
    <property type="match status" value="1"/>
</dbReference>
<dbReference type="Pfam" id="PF07654">
    <property type="entry name" value="C1-set"/>
    <property type="match status" value="1"/>
</dbReference>
<dbReference type="Pfam" id="PF00129">
    <property type="entry name" value="MHC_I"/>
    <property type="match status" value="1"/>
</dbReference>
<dbReference type="Pfam" id="PF06623">
    <property type="entry name" value="MHC_I_C"/>
    <property type="match status" value="1"/>
</dbReference>
<dbReference type="PRINTS" id="PR01638">
    <property type="entry name" value="MHCCLASSI"/>
</dbReference>
<dbReference type="SMART" id="SM00407">
    <property type="entry name" value="IGc1"/>
    <property type="match status" value="1"/>
</dbReference>
<dbReference type="SUPFAM" id="SSF48726">
    <property type="entry name" value="Immunoglobulin"/>
    <property type="match status" value="1"/>
</dbReference>
<dbReference type="SUPFAM" id="SSF54452">
    <property type="entry name" value="MHC antigen-recognition domain"/>
    <property type="match status" value="1"/>
</dbReference>
<dbReference type="PROSITE" id="PS50835">
    <property type="entry name" value="IG_LIKE"/>
    <property type="match status" value="1"/>
</dbReference>
<dbReference type="PROSITE" id="PS00290">
    <property type="entry name" value="IG_MHC"/>
    <property type="match status" value="1"/>
</dbReference>
<comment type="function">
    <text>Involved in the presentation of foreign antigens to the immune system.</text>
</comment>
<comment type="subunit">
    <text>Heterodimer of an alpha chain and a beta chain (beta-2-microglobulin).</text>
</comment>
<comment type="subcellular location">
    <subcellularLocation>
        <location>Membrane</location>
        <topology>Single-pass type I membrane protein</topology>
    </subcellularLocation>
</comment>
<comment type="similarity">
    <text evidence="6">Belongs to the MHC class I family.</text>
</comment>
<comment type="sequence caution" evidence="6">
    <conflict type="erroneous initiation">
        <sequence resource="EMBL-CDS" id="AAA36952"/>
    </conflict>
</comment>
<reference key="1">
    <citation type="journal article" date="1990" name="J. Immunol.">
        <title>Molecular cloning of cDNA that encode MHC class I molecules from a New World primate (Saguinus oedipus). Natural selection acts at positions that may affect peptide presentation to T cells.</title>
        <authorList>
            <person name="Watkins D.I."/>
            <person name="Letvin N.L."/>
            <person name="Hughes A.L."/>
            <person name="Tedder T.F."/>
        </authorList>
    </citation>
    <scope>NUCLEOTIDE SEQUENCE [MRNA]</scope>
</reference>
<feature type="signal peptide" evidence="1">
    <location>
        <begin position="1"/>
        <end position="24"/>
    </location>
</feature>
<feature type="chain" id="PRO_0000018921" description="Class I histocompatibility antigen, B alpha chain">
    <location>
        <begin position="25"/>
        <end position="365"/>
    </location>
</feature>
<feature type="topological domain" description="Extracellular" evidence="3">
    <location>
        <begin position="25"/>
        <end position="308"/>
    </location>
</feature>
<feature type="transmembrane region" description="Helical" evidence="3">
    <location>
        <begin position="309"/>
        <end position="332"/>
    </location>
</feature>
<feature type="topological domain" description="Cytoplasmic" evidence="3">
    <location>
        <begin position="333"/>
        <end position="365"/>
    </location>
</feature>
<feature type="domain" description="Ig-like C1-type">
    <location>
        <begin position="209"/>
        <end position="297"/>
    </location>
</feature>
<feature type="region of interest" description="Alpha-1">
    <location>
        <begin position="25"/>
        <end position="114"/>
    </location>
</feature>
<feature type="region of interest" description="Alpha-2">
    <location>
        <begin position="115"/>
        <end position="206"/>
    </location>
</feature>
<feature type="region of interest" description="Alpha-3">
    <location>
        <begin position="207"/>
        <end position="298"/>
    </location>
</feature>
<feature type="region of interest" description="Connecting peptide">
    <location>
        <begin position="299"/>
        <end position="308"/>
    </location>
</feature>
<feature type="region of interest" description="Disordered" evidence="5">
    <location>
        <begin position="337"/>
        <end position="361"/>
    </location>
</feature>
<feature type="compositionally biased region" description="Polar residues" evidence="5">
    <location>
        <begin position="346"/>
        <end position="359"/>
    </location>
</feature>
<feature type="modified residue" description="Phosphoserine" evidence="2">
    <location>
        <position position="356"/>
    </location>
</feature>
<feature type="modified residue" description="Phosphoserine" evidence="2">
    <location>
        <position position="359"/>
    </location>
</feature>
<feature type="glycosylation site" description="N-linked (GlcNAc...) asparagine" evidence="1">
    <location>
        <position position="110"/>
    </location>
</feature>
<feature type="disulfide bond" evidence="4">
    <location>
        <begin position="125"/>
        <end position="188"/>
    </location>
</feature>
<feature type="disulfide bond" evidence="4">
    <location>
        <begin position="227"/>
        <end position="283"/>
    </location>
</feature>
<protein>
    <recommendedName>
        <fullName>Class I histocompatibility antigen, B alpha chain</fullName>
    </recommendedName>
</protein>
<proteinExistence type="evidence at transcript level"/>
<organism>
    <name type="scientific">Saguinus oedipus</name>
    <name type="common">Cotton-top tamarin</name>
    <dbReference type="NCBI Taxonomy" id="9490"/>
    <lineage>
        <taxon>Eukaryota</taxon>
        <taxon>Metazoa</taxon>
        <taxon>Chordata</taxon>
        <taxon>Craniata</taxon>
        <taxon>Vertebrata</taxon>
        <taxon>Euteleostomi</taxon>
        <taxon>Mammalia</taxon>
        <taxon>Eutheria</taxon>
        <taxon>Euarchontoglires</taxon>
        <taxon>Primates</taxon>
        <taxon>Haplorrhini</taxon>
        <taxon>Platyrrhini</taxon>
        <taxon>Cebidae</taxon>
        <taxon>Callitrichinae</taxon>
        <taxon>Saguinus</taxon>
    </lineage>
</organism>
<evidence type="ECO:0000250" key="1"/>
<evidence type="ECO:0000250" key="2">
    <source>
        <dbReference type="UniProtKB" id="P01900"/>
    </source>
</evidence>
<evidence type="ECO:0000255" key="3"/>
<evidence type="ECO:0000255" key="4">
    <source>
        <dbReference type="PROSITE-ProRule" id="PRU00114"/>
    </source>
</evidence>
<evidence type="ECO:0000256" key="5">
    <source>
        <dbReference type="SAM" id="MobiDB-lite"/>
    </source>
</evidence>
<evidence type="ECO:0000305" key="6"/>
<accession>P30516</accession>